<proteinExistence type="inferred from homology"/>
<dbReference type="EMBL" id="AE000782">
    <property type="protein sequence ID" value="AAB89031.1"/>
    <property type="molecule type" value="Genomic_DNA"/>
</dbReference>
<dbReference type="PIR" id="A69528">
    <property type="entry name" value="A69528"/>
</dbReference>
<dbReference type="RefSeq" id="WP_010879714.1">
    <property type="nucleotide sequence ID" value="NC_000917.1"/>
</dbReference>
<dbReference type="SMR" id="O28058"/>
<dbReference type="STRING" id="224325.AF_2225"/>
<dbReference type="PaxDb" id="224325-AF_2225"/>
<dbReference type="EnsemblBacteria" id="AAB89031">
    <property type="protein sequence ID" value="AAB89031"/>
    <property type="gene ID" value="AF_2225"/>
</dbReference>
<dbReference type="KEGG" id="afu:AF_2225"/>
<dbReference type="eggNOG" id="arCOG00235">
    <property type="taxonomic scope" value="Archaea"/>
</dbReference>
<dbReference type="HOGENOM" id="CLU_028458_4_2_2"/>
<dbReference type="OrthoDB" id="6242at2157"/>
<dbReference type="PhylomeDB" id="O28058"/>
<dbReference type="Proteomes" id="UP000002199">
    <property type="component" value="Chromosome"/>
</dbReference>
<dbReference type="GO" id="GO:0003824">
    <property type="term" value="F:catalytic activity"/>
    <property type="evidence" value="ECO:0007669"/>
    <property type="project" value="InterPro"/>
</dbReference>
<dbReference type="GO" id="GO:0046872">
    <property type="term" value="F:metal ion binding"/>
    <property type="evidence" value="ECO:0007669"/>
    <property type="project" value="UniProtKB-KW"/>
</dbReference>
<dbReference type="GO" id="GO:0044281">
    <property type="term" value="P:small molecule metabolic process"/>
    <property type="evidence" value="ECO:0007669"/>
    <property type="project" value="UniProtKB-ARBA"/>
</dbReference>
<dbReference type="FunFam" id="3.90.850.10:FF:000002">
    <property type="entry name" value="2-hydroxyhepta-2,4-diene-1,7-dioate isomerase"/>
    <property type="match status" value="1"/>
</dbReference>
<dbReference type="Gene3D" id="3.90.850.10">
    <property type="entry name" value="Fumarylacetoacetase-like, C-terminal domain"/>
    <property type="match status" value="1"/>
</dbReference>
<dbReference type="InterPro" id="IPR051121">
    <property type="entry name" value="FAH"/>
</dbReference>
<dbReference type="InterPro" id="IPR011234">
    <property type="entry name" value="Fumarylacetoacetase-like_C"/>
</dbReference>
<dbReference type="InterPro" id="IPR036663">
    <property type="entry name" value="Fumarylacetoacetase_C_sf"/>
</dbReference>
<dbReference type="PANTHER" id="PTHR42796:SF4">
    <property type="entry name" value="FUMARYLACETOACETATE HYDROLASE DOMAIN-CONTAINING PROTEIN 2A"/>
    <property type="match status" value="1"/>
</dbReference>
<dbReference type="PANTHER" id="PTHR42796">
    <property type="entry name" value="FUMARYLACETOACETATE HYDROLASE DOMAIN-CONTAINING PROTEIN 2A-RELATED"/>
    <property type="match status" value="1"/>
</dbReference>
<dbReference type="Pfam" id="PF01557">
    <property type="entry name" value="FAA_hydrolase"/>
    <property type="match status" value="1"/>
</dbReference>
<dbReference type="SUPFAM" id="SSF56529">
    <property type="entry name" value="FAH"/>
    <property type="match status" value="1"/>
</dbReference>
<protein>
    <recommendedName>
        <fullName>Uncharacterized protein AF_2225</fullName>
    </recommendedName>
</protein>
<organism>
    <name type="scientific">Archaeoglobus fulgidus (strain ATCC 49558 / DSM 4304 / JCM 9628 / NBRC 100126 / VC-16)</name>
    <dbReference type="NCBI Taxonomy" id="224325"/>
    <lineage>
        <taxon>Archaea</taxon>
        <taxon>Methanobacteriati</taxon>
        <taxon>Methanobacteriota</taxon>
        <taxon>Archaeoglobi</taxon>
        <taxon>Archaeoglobales</taxon>
        <taxon>Archaeoglobaceae</taxon>
        <taxon>Archaeoglobus</taxon>
    </lineage>
</organism>
<reference key="1">
    <citation type="journal article" date="1997" name="Nature">
        <title>The complete genome sequence of the hyperthermophilic, sulphate-reducing archaeon Archaeoglobus fulgidus.</title>
        <authorList>
            <person name="Klenk H.-P."/>
            <person name="Clayton R.A."/>
            <person name="Tomb J.-F."/>
            <person name="White O."/>
            <person name="Nelson K.E."/>
            <person name="Ketchum K.A."/>
            <person name="Dodson R.J."/>
            <person name="Gwinn M.L."/>
            <person name="Hickey E.K."/>
            <person name="Peterson J.D."/>
            <person name="Richardson D.L."/>
            <person name="Kerlavage A.R."/>
            <person name="Graham D.E."/>
            <person name="Kyrpides N.C."/>
            <person name="Fleischmann R.D."/>
            <person name="Quackenbush J."/>
            <person name="Lee N.H."/>
            <person name="Sutton G.G."/>
            <person name="Gill S.R."/>
            <person name="Kirkness E.F."/>
            <person name="Dougherty B.A."/>
            <person name="McKenney K."/>
            <person name="Adams M.D."/>
            <person name="Loftus B.J."/>
            <person name="Peterson S.N."/>
            <person name="Reich C.I."/>
            <person name="McNeil L.K."/>
            <person name="Badger J.H."/>
            <person name="Glodek A."/>
            <person name="Zhou L."/>
            <person name="Overbeek R."/>
            <person name="Gocayne J.D."/>
            <person name="Weidman J.F."/>
            <person name="McDonald L.A."/>
            <person name="Utterback T.R."/>
            <person name="Cotton M.D."/>
            <person name="Spriggs T."/>
            <person name="Artiach P."/>
            <person name="Kaine B.P."/>
            <person name="Sykes S.M."/>
            <person name="Sadow P.W."/>
            <person name="D'Andrea K.P."/>
            <person name="Bowman C."/>
            <person name="Fujii C."/>
            <person name="Garland S.A."/>
            <person name="Mason T.M."/>
            <person name="Olsen G.J."/>
            <person name="Fraser C.M."/>
            <person name="Smith H.O."/>
            <person name="Woese C.R."/>
            <person name="Venter J.C."/>
        </authorList>
    </citation>
    <scope>NUCLEOTIDE SEQUENCE [LARGE SCALE GENOMIC DNA]</scope>
    <source>
        <strain>ATCC 49558 / DSM 4304 / JCM 9628 / NBRC 100126 / VC-16</strain>
    </source>
</reference>
<gene>
    <name type="ordered locus">AF_2225</name>
</gene>
<keyword id="KW-0479">Metal-binding</keyword>
<keyword id="KW-1185">Reference proteome</keyword>
<comment type="similarity">
    <text evidence="2">Belongs to the FAH family.</text>
</comment>
<feature type="chain" id="PRO_0000156837" description="Uncharacterized protein AF_2225">
    <location>
        <begin position="1"/>
        <end position="250"/>
    </location>
</feature>
<feature type="binding site" evidence="1">
    <location>
        <position position="97"/>
    </location>
    <ligand>
        <name>a divalent metal cation</name>
        <dbReference type="ChEBI" id="CHEBI:60240"/>
    </ligand>
</feature>
<feature type="binding site" evidence="1">
    <location>
        <position position="99"/>
    </location>
    <ligand>
        <name>a divalent metal cation</name>
        <dbReference type="ChEBI" id="CHEBI:60240"/>
    </ligand>
</feature>
<feature type="binding site" evidence="1">
    <location>
        <position position="128"/>
    </location>
    <ligand>
        <name>a divalent metal cation</name>
        <dbReference type="ChEBI" id="CHEBI:60240"/>
    </ligand>
</feature>
<sequence length="250" mass="27370">MLGRFVANGRIYEGSFEIDGELLVFDGYEVPLTAVKFLPPVVPSKIIAVGLNYIDHAEELNMPVPEEPILFMKPSTAVIGHDDCIILPQISQRVDYEGELAVVIAEDCRNVPETNAADYILGYTCFNDVTARDLQAKDGQWTRAKSFDTFAPLGPYIAEIDDPSKLGIQTRVNGKVVQKSNTSNLIFDVFQLVSFVSSVMTLKAGDVIATGTPAGVGMLKDGDVVEVEIEKIGILRNTAVKIDRQIRCEC</sequence>
<accession>O28058</accession>
<evidence type="ECO:0000250" key="1"/>
<evidence type="ECO:0000305" key="2"/>
<name>Y2225_ARCFU</name>